<protein>
    <recommendedName>
        <fullName>Enterotoxin type C-3</fullName>
    </recommendedName>
    <alternativeName>
        <fullName>SEC3</fullName>
    </alternativeName>
</protein>
<gene>
    <name type="primary">entC3</name>
    <name type="ordered locus">SAV2009</name>
</gene>
<organism>
    <name type="scientific">Staphylococcus aureus (strain Mu50 / ATCC 700699)</name>
    <dbReference type="NCBI Taxonomy" id="158878"/>
    <lineage>
        <taxon>Bacteria</taxon>
        <taxon>Bacillati</taxon>
        <taxon>Bacillota</taxon>
        <taxon>Bacilli</taxon>
        <taxon>Bacillales</taxon>
        <taxon>Staphylococcaceae</taxon>
        <taxon>Staphylococcus</taxon>
    </lineage>
</organism>
<sequence length="266" mass="30671">MYKRLFISRVILIFALILVISTPNVLAESQPDPMPDDLHKSSEFTGTMGNMKYLYDDHYVSATKVKSVDKFLAHDLIYNISDKKLKNYDKVKTELLNEDLAKKYKDEVVDVYGSNYYVNCYFSSKDNVGKVTGGKTCMYGGITKHEGNHFDNGNLQNVLVRVYENKRNTISFEVQTDKKSVTAQELDIKARNFLINKKNLYEFNSSPYETGYIKFIENNGNTFWYDMMPAPGDKFDQSKYLMMYNDNKTVDSKSVKIEVHLTTKNG</sequence>
<evidence type="ECO:0000250" key="1"/>
<evidence type="ECO:0000250" key="2">
    <source>
        <dbReference type="UniProtKB" id="P0A0L5"/>
    </source>
</evidence>
<evidence type="ECO:0000250" key="3">
    <source>
        <dbReference type="UniProtKB" id="P34071"/>
    </source>
</evidence>
<evidence type="ECO:0000305" key="4"/>
<evidence type="ECO:0007829" key="5">
    <source>
        <dbReference type="PDB" id="1PYW"/>
    </source>
</evidence>
<dbReference type="EMBL" id="BA000017">
    <property type="protein sequence ID" value="BAB58171.1"/>
    <property type="molecule type" value="Genomic_DNA"/>
</dbReference>
<dbReference type="PDB" id="1PYW">
    <property type="method" value="X-ray"/>
    <property type="resolution" value="2.10 A"/>
    <property type="chains" value="D=28-266"/>
</dbReference>
<dbReference type="PDBsum" id="1PYW"/>
<dbReference type="SMR" id="P0A0L3"/>
<dbReference type="Allergome" id="2141">
    <property type="allergen name" value="Sta a SEC"/>
</dbReference>
<dbReference type="KEGG" id="sav:SAV2009"/>
<dbReference type="HOGENOM" id="CLU_093855_0_1_9"/>
<dbReference type="PhylomeDB" id="P0A0L3"/>
<dbReference type="EvolutionaryTrace" id="P0A0L3"/>
<dbReference type="PRO" id="PR:P0A0L3"/>
<dbReference type="Proteomes" id="UP000002481">
    <property type="component" value="Chromosome"/>
</dbReference>
<dbReference type="GO" id="GO:0005576">
    <property type="term" value="C:extracellular region"/>
    <property type="evidence" value="ECO:0007669"/>
    <property type="project" value="UniProtKB-SubCell"/>
</dbReference>
<dbReference type="GO" id="GO:0046872">
    <property type="term" value="F:metal ion binding"/>
    <property type="evidence" value="ECO:0007669"/>
    <property type="project" value="UniProtKB-KW"/>
</dbReference>
<dbReference type="GO" id="GO:0090729">
    <property type="term" value="F:toxin activity"/>
    <property type="evidence" value="ECO:0007669"/>
    <property type="project" value="UniProtKB-KW"/>
</dbReference>
<dbReference type="Gene3D" id="2.40.50.110">
    <property type="match status" value="1"/>
</dbReference>
<dbReference type="Gene3D" id="3.10.20.120">
    <property type="match status" value="1"/>
</dbReference>
<dbReference type="InterPro" id="IPR008992">
    <property type="entry name" value="Enterotoxin"/>
</dbReference>
<dbReference type="InterPro" id="IPR006126">
    <property type="entry name" value="Staph/Strept_toxin_CS"/>
</dbReference>
<dbReference type="InterPro" id="IPR006173">
    <property type="entry name" value="Staph_tox_OB"/>
</dbReference>
<dbReference type="InterPro" id="IPR016091">
    <property type="entry name" value="SuperAg_toxin_C"/>
</dbReference>
<dbReference type="InterPro" id="IPR013307">
    <property type="entry name" value="Superantigen_bac"/>
</dbReference>
<dbReference type="InterPro" id="IPR006123">
    <property type="entry name" value="Toxin_b-grasp_Staph/Strep"/>
</dbReference>
<dbReference type="InterPro" id="IPR006177">
    <property type="entry name" value="Toxin_bac"/>
</dbReference>
<dbReference type="Pfam" id="PF02876">
    <property type="entry name" value="Stap_Strp_tox_C"/>
    <property type="match status" value="1"/>
</dbReference>
<dbReference type="Pfam" id="PF01123">
    <property type="entry name" value="Stap_Strp_toxin"/>
    <property type="match status" value="1"/>
</dbReference>
<dbReference type="PRINTS" id="PR00279">
    <property type="entry name" value="BACTRLTOXIN"/>
</dbReference>
<dbReference type="PRINTS" id="PR01898">
    <property type="entry name" value="SAGSUPRFAMLY"/>
</dbReference>
<dbReference type="SUPFAM" id="SSF50203">
    <property type="entry name" value="Bacterial enterotoxins"/>
    <property type="match status" value="1"/>
</dbReference>
<dbReference type="SUPFAM" id="SSF54334">
    <property type="entry name" value="Superantigen toxins, C-terminal domain"/>
    <property type="match status" value="1"/>
</dbReference>
<dbReference type="PROSITE" id="PS00277">
    <property type="entry name" value="STAPH_STREP_TOXIN_1"/>
    <property type="match status" value="1"/>
</dbReference>
<dbReference type="PROSITE" id="PS00278">
    <property type="entry name" value="STAPH_STREP_TOXIN_2"/>
    <property type="match status" value="1"/>
</dbReference>
<accession>P0A0L3</accession>
<accession>P23313</accession>
<name>ENTC3_STAAM</name>
<proteinExistence type="evidence at protein level"/>
<comment type="function">
    <text evidence="2 3">Staphylococcal enterotoxin that activates the host immune system by binding as unprocessed molecules to major histocompatibility (MHC) complex class II and T-cell receptor (TCR) molecules. In turn, this ternary complex activates a large number of T-lymphocytes initiating a systemic release of pro-inflammatory cytokines (By similarity). Also causes the intoxication staphylococcal food poisoning syndrome (By similarity).</text>
</comment>
<comment type="subunit">
    <text evidence="2">Interacts with MHC class II molecules composed of alpha/HLA-DRA and beta/HLA-DRB1 chains. Interacts with host T-cell receptor/TCR beta variable chain TRBV8-2.</text>
</comment>
<comment type="subcellular location">
    <subcellularLocation>
        <location>Secreted</location>
    </subcellularLocation>
</comment>
<comment type="similarity">
    <text evidence="4">Belongs to the staphylococcal/streptococcal toxin family.</text>
</comment>
<feature type="signal peptide" evidence="1">
    <location>
        <begin position="1"/>
        <end position="27"/>
    </location>
</feature>
<feature type="chain" id="PRO_0000035609" description="Enterotoxin type C-3">
    <location>
        <begin position="28"/>
        <end position="266"/>
    </location>
</feature>
<feature type="disulfide bond" evidence="1">
    <location>
        <begin position="120"/>
        <end position="137"/>
    </location>
</feature>
<feature type="helix" evidence="5">
    <location>
        <begin position="35"/>
        <end position="37"/>
    </location>
</feature>
<feature type="helix" evidence="5">
    <location>
        <begin position="41"/>
        <end position="43"/>
    </location>
</feature>
<feature type="helix" evidence="5">
    <location>
        <begin position="49"/>
        <end position="55"/>
    </location>
</feature>
<feature type="strand" evidence="5">
    <location>
        <begin position="60"/>
        <end position="65"/>
    </location>
</feature>
<feature type="strand" evidence="5">
    <location>
        <begin position="75"/>
        <end position="79"/>
    </location>
</feature>
<feature type="turn" evidence="5">
    <location>
        <begin position="83"/>
        <end position="85"/>
    </location>
</feature>
<feature type="strand" evidence="5">
    <location>
        <begin position="89"/>
        <end position="94"/>
    </location>
</feature>
<feature type="helix" evidence="5">
    <location>
        <begin position="98"/>
        <end position="105"/>
    </location>
</feature>
<feature type="strand" evidence="5">
    <location>
        <begin position="109"/>
        <end position="113"/>
    </location>
</feature>
<feature type="strand" evidence="5">
    <location>
        <begin position="135"/>
        <end position="139"/>
    </location>
</feature>
<feature type="strand" evidence="5">
    <location>
        <begin position="142"/>
        <end position="144"/>
    </location>
</feature>
<feature type="turn" evidence="5">
    <location>
        <begin position="151"/>
        <end position="153"/>
    </location>
</feature>
<feature type="strand" evidence="5">
    <location>
        <begin position="156"/>
        <end position="164"/>
    </location>
</feature>
<feature type="strand" evidence="5">
    <location>
        <begin position="167"/>
        <end position="182"/>
    </location>
</feature>
<feature type="helix" evidence="5">
    <location>
        <begin position="183"/>
        <end position="198"/>
    </location>
</feature>
<feature type="strand" evidence="5">
    <location>
        <begin position="203"/>
        <end position="205"/>
    </location>
</feature>
<feature type="strand" evidence="5">
    <location>
        <begin position="209"/>
        <end position="216"/>
    </location>
</feature>
<feature type="strand" evidence="5">
    <location>
        <begin position="222"/>
        <end position="226"/>
    </location>
</feature>
<feature type="strand" evidence="5">
    <location>
        <begin position="231"/>
        <end position="233"/>
    </location>
</feature>
<feature type="helix" evidence="5">
    <location>
        <begin position="237"/>
        <end position="241"/>
    </location>
</feature>
<feature type="helix" evidence="5">
    <location>
        <begin position="242"/>
        <end position="246"/>
    </location>
</feature>
<feature type="strand" evidence="5">
    <location>
        <begin position="249"/>
        <end position="251"/>
    </location>
</feature>
<feature type="turn" evidence="5">
    <location>
        <begin position="252"/>
        <end position="254"/>
    </location>
</feature>
<feature type="strand" evidence="5">
    <location>
        <begin position="256"/>
        <end position="262"/>
    </location>
</feature>
<reference key="1">
    <citation type="journal article" date="2001" name="Lancet">
        <title>Whole genome sequencing of meticillin-resistant Staphylococcus aureus.</title>
        <authorList>
            <person name="Kuroda M."/>
            <person name="Ohta T."/>
            <person name="Uchiyama I."/>
            <person name="Baba T."/>
            <person name="Yuzawa H."/>
            <person name="Kobayashi I."/>
            <person name="Cui L."/>
            <person name="Oguchi A."/>
            <person name="Aoki K."/>
            <person name="Nagai Y."/>
            <person name="Lian J.-Q."/>
            <person name="Ito T."/>
            <person name="Kanamori M."/>
            <person name="Matsumaru H."/>
            <person name="Maruyama A."/>
            <person name="Murakami H."/>
            <person name="Hosoyama A."/>
            <person name="Mizutani-Ui Y."/>
            <person name="Takahashi N.K."/>
            <person name="Sawano T."/>
            <person name="Inoue R."/>
            <person name="Kaito C."/>
            <person name="Sekimizu K."/>
            <person name="Hirakawa H."/>
            <person name="Kuhara S."/>
            <person name="Goto S."/>
            <person name="Yabuzaki J."/>
            <person name="Kanehisa M."/>
            <person name="Yamashita A."/>
            <person name="Oshima K."/>
            <person name="Furuya K."/>
            <person name="Yoshino C."/>
            <person name="Shiba T."/>
            <person name="Hattori M."/>
            <person name="Ogasawara N."/>
            <person name="Hayashi H."/>
            <person name="Hiramatsu K."/>
        </authorList>
    </citation>
    <scope>NUCLEOTIDE SEQUENCE [LARGE SCALE GENOMIC DNA]</scope>
    <source>
        <strain>Mu50 / ATCC 700699</strain>
    </source>
</reference>
<keyword id="KW-0002">3D-structure</keyword>
<keyword id="KW-1015">Disulfide bond</keyword>
<keyword id="KW-0260">Enterotoxin</keyword>
<keyword id="KW-0479">Metal-binding</keyword>
<keyword id="KW-0964">Secreted</keyword>
<keyword id="KW-0732">Signal</keyword>
<keyword id="KW-0766">Superantigen</keyword>
<keyword id="KW-0800">Toxin</keyword>
<keyword id="KW-0843">Virulence</keyword>
<keyword id="KW-0862">Zinc</keyword>